<keyword id="KW-0539">Nucleus</keyword>
<keyword id="KW-0677">Repeat</keyword>
<keyword id="KW-0687">Ribonucleoprotein</keyword>
<keyword id="KW-0694">RNA-binding</keyword>
<keyword id="KW-0698">rRNA processing</keyword>
<protein>
    <recommendedName>
        <fullName>Multiple RNA-binding domain-containing protein 1</fullName>
    </recommendedName>
</protein>
<proteinExistence type="inferred from homology"/>
<organism>
    <name type="scientific">Cryptococcus neoformans var. neoformans serotype D (strain B-3501A)</name>
    <name type="common">Filobasidiella neoformans</name>
    <dbReference type="NCBI Taxonomy" id="283643"/>
    <lineage>
        <taxon>Eukaryota</taxon>
        <taxon>Fungi</taxon>
        <taxon>Dikarya</taxon>
        <taxon>Basidiomycota</taxon>
        <taxon>Agaricomycotina</taxon>
        <taxon>Tremellomycetes</taxon>
        <taxon>Tremellales</taxon>
        <taxon>Cryptococcaceae</taxon>
        <taxon>Cryptococcus</taxon>
        <taxon>Cryptococcus neoformans species complex</taxon>
    </lineage>
</organism>
<dbReference type="EMBL" id="AAEY01000013">
    <property type="protein sequence ID" value="EAL21969.1"/>
    <property type="molecule type" value="Genomic_DNA"/>
</dbReference>
<dbReference type="RefSeq" id="XP_776616.1">
    <property type="nucleotide sequence ID" value="XM_771523.1"/>
</dbReference>
<dbReference type="SMR" id="P0CR17"/>
<dbReference type="EnsemblFungi" id="AAW42566">
    <property type="protein sequence ID" value="AAW42566"/>
    <property type="gene ID" value="CNC06110"/>
</dbReference>
<dbReference type="GeneID" id="4934773"/>
<dbReference type="KEGG" id="cnb:CNBC1090"/>
<dbReference type="VEuPathDB" id="FungiDB:CNBC1090"/>
<dbReference type="HOGENOM" id="CLU_008479_0_0_1"/>
<dbReference type="OrthoDB" id="5541at5206"/>
<dbReference type="GO" id="GO:0005634">
    <property type="term" value="C:nucleus"/>
    <property type="evidence" value="ECO:0007669"/>
    <property type="project" value="UniProtKB-SubCell"/>
</dbReference>
<dbReference type="GO" id="GO:1990904">
    <property type="term" value="C:ribonucleoprotein complex"/>
    <property type="evidence" value="ECO:0007669"/>
    <property type="project" value="UniProtKB-KW"/>
</dbReference>
<dbReference type="GO" id="GO:0003729">
    <property type="term" value="F:mRNA binding"/>
    <property type="evidence" value="ECO:0007669"/>
    <property type="project" value="TreeGrafter"/>
</dbReference>
<dbReference type="GO" id="GO:0006364">
    <property type="term" value="P:rRNA processing"/>
    <property type="evidence" value="ECO:0007669"/>
    <property type="project" value="UniProtKB-KW"/>
</dbReference>
<dbReference type="CDD" id="cd12568">
    <property type="entry name" value="RRM3_MRD1"/>
    <property type="match status" value="1"/>
</dbReference>
<dbReference type="CDD" id="cd12320">
    <property type="entry name" value="RRM6_RBM19_RRM5_MRD1"/>
    <property type="match status" value="1"/>
</dbReference>
<dbReference type="FunFam" id="3.30.70.330:FF:000942">
    <property type="entry name" value="Multiple RNA-binding domain-containing protein 1"/>
    <property type="match status" value="1"/>
</dbReference>
<dbReference type="FunFam" id="3.30.70.330:FF:001003">
    <property type="entry name" value="Multiple RNA-binding domain-containing protein 1"/>
    <property type="match status" value="1"/>
</dbReference>
<dbReference type="FunFam" id="3.30.70.330:FF:001387">
    <property type="entry name" value="Multiple RNA-binding domain-containing protein 1"/>
    <property type="match status" value="1"/>
</dbReference>
<dbReference type="FunFam" id="3.30.70.330:FF:000277">
    <property type="entry name" value="RNA binding motif protein 19"/>
    <property type="match status" value="1"/>
</dbReference>
<dbReference type="Gene3D" id="3.30.70.330">
    <property type="match status" value="5"/>
</dbReference>
<dbReference type="InterPro" id="IPR034482">
    <property type="entry name" value="Mrd1_RRM3"/>
</dbReference>
<dbReference type="InterPro" id="IPR012677">
    <property type="entry name" value="Nucleotide-bd_a/b_plait_sf"/>
</dbReference>
<dbReference type="InterPro" id="IPR035979">
    <property type="entry name" value="RBD_domain_sf"/>
</dbReference>
<dbReference type="InterPro" id="IPR000504">
    <property type="entry name" value="RRM_dom"/>
</dbReference>
<dbReference type="InterPro" id="IPR051945">
    <property type="entry name" value="RRM_MRD1_RNA_proc_ribogen"/>
</dbReference>
<dbReference type="PANTHER" id="PTHR48039">
    <property type="entry name" value="RNA-BINDING MOTIF PROTEIN 14B"/>
    <property type="match status" value="1"/>
</dbReference>
<dbReference type="PANTHER" id="PTHR48039:SF5">
    <property type="entry name" value="RNA-BINDING PROTEIN 28"/>
    <property type="match status" value="1"/>
</dbReference>
<dbReference type="Pfam" id="PF00076">
    <property type="entry name" value="RRM_1"/>
    <property type="match status" value="4"/>
</dbReference>
<dbReference type="SMART" id="SM00360">
    <property type="entry name" value="RRM"/>
    <property type="match status" value="5"/>
</dbReference>
<dbReference type="SUPFAM" id="SSF54928">
    <property type="entry name" value="RNA-binding domain, RBD"/>
    <property type="match status" value="4"/>
</dbReference>
<dbReference type="PROSITE" id="PS50102">
    <property type="entry name" value="RRM"/>
    <property type="match status" value="5"/>
</dbReference>
<comment type="function">
    <text evidence="1">Involved in pre-rRNA processing.</text>
</comment>
<comment type="subcellular location">
    <subcellularLocation>
        <location evidence="1">Nucleus</location>
    </subcellularLocation>
</comment>
<comment type="similarity">
    <text evidence="4">Belongs to the RRM MRD1 family.</text>
</comment>
<gene>
    <name type="primary">MRD1</name>
    <name type="ordered locus">CNBC1090</name>
</gene>
<evidence type="ECO:0000250" key="1"/>
<evidence type="ECO:0000255" key="2">
    <source>
        <dbReference type="PROSITE-ProRule" id="PRU00176"/>
    </source>
</evidence>
<evidence type="ECO:0000256" key="3">
    <source>
        <dbReference type="SAM" id="MobiDB-lite"/>
    </source>
</evidence>
<evidence type="ECO:0000305" key="4"/>
<accession>P0CR17</accession>
<accession>Q55WN0</accession>
<accession>Q5KJL5</accession>
<sequence>MRCRSVALVWREWKWRGVGDKRQSRLIFLNLPSTLNPDTFRKTLLSPATLKSTTITDTKLVPKRRFAFVGYKDAEEAQKVKEWFDGTYAFGGGKVKVDFVKDEPLKTGDKLNRGEKSKEKRSKEGRDNVQEKQEPNKRLQEFMSVMKGVDPAMASPEASTSTAEGTKKEKSVKGKEKSEEPEEAEADDDDAAWLRRRQAALEGEPSTPQLSADEQLILSTSRLFVRNLAFITTSESLSSHFSTYGRIDECHLPVSQTTGEPLGTAFLQFHNAEDALAAYKALDKTIFQGRLLHVLPGRAKPGQEGAAAGSGVVDGKVLGKRDEGRGEVKSKVDAKRKQESAKGVNWASLYMNSDAVAASVADRMGISKSELLNADSGNSAVKLALAETTVIEETKKYFEEAGIVLESLQPRVPRSQTTILVKNIPYGTSIQSLTDLFAPHGKLTRVLLPPAGTLGVVEFENHMDAGRAFKALAYRRLGNAVLYLEKGPVGMFKSETAPGVGPISTEQKREEEAKALAEKVESLPEQPDPTDEAGSTLFLKGLNFTTTTPHLQTVLSHIPGFSFARVQMKPDPKRPGEKLSMGYGFVGFKTKEAATKALKALEGFEIDGKSLEVKFAQRGAEDDRETKKGGDAEGGKTKSTKVLVKNLPFEATKKDVRELFSAYGQLKSLRLPRKAVPTSTGAQSTRGFAFLEFTTHTEAARAMEALKHTHLLGRHLVLQWANEGEEVDIKGLREKVKGEVRGMEDGGDRKRRKLDFKGGKEDEMDGLEV</sequence>
<feature type="chain" id="PRO_0000410269" description="Multiple RNA-binding domain-containing protein 1">
    <location>
        <begin position="1"/>
        <end position="769"/>
    </location>
</feature>
<feature type="domain" description="RRM 1" evidence="2">
    <location>
        <begin position="24"/>
        <end position="102"/>
    </location>
</feature>
<feature type="domain" description="RRM 2" evidence="2">
    <location>
        <begin position="221"/>
        <end position="299"/>
    </location>
</feature>
<feature type="domain" description="RRM 3" evidence="2">
    <location>
        <begin position="417"/>
        <end position="489"/>
    </location>
</feature>
<feature type="domain" description="RRM 4" evidence="2">
    <location>
        <begin position="535"/>
        <end position="618"/>
    </location>
</feature>
<feature type="domain" description="RRM 5" evidence="2">
    <location>
        <begin position="640"/>
        <end position="723"/>
    </location>
</feature>
<feature type="region of interest" description="Disordered" evidence="3">
    <location>
        <begin position="105"/>
        <end position="139"/>
    </location>
</feature>
<feature type="region of interest" description="Disordered" evidence="3">
    <location>
        <begin position="151"/>
        <end position="191"/>
    </location>
</feature>
<feature type="region of interest" description="Disordered" evidence="3">
    <location>
        <begin position="617"/>
        <end position="637"/>
    </location>
</feature>
<feature type="region of interest" description="Disordered" evidence="3">
    <location>
        <begin position="740"/>
        <end position="769"/>
    </location>
</feature>
<feature type="compositionally biased region" description="Basic and acidic residues" evidence="3">
    <location>
        <begin position="165"/>
        <end position="178"/>
    </location>
</feature>
<feature type="compositionally biased region" description="Acidic residues" evidence="3">
    <location>
        <begin position="179"/>
        <end position="191"/>
    </location>
</feature>
<feature type="compositionally biased region" description="Basic and acidic residues" evidence="3">
    <location>
        <begin position="619"/>
        <end position="636"/>
    </location>
</feature>
<name>MRD1_CRYNB</name>
<reference key="1">
    <citation type="journal article" date="2005" name="Science">
        <title>The genome of the basidiomycetous yeast and human pathogen Cryptococcus neoformans.</title>
        <authorList>
            <person name="Loftus B.J."/>
            <person name="Fung E."/>
            <person name="Roncaglia P."/>
            <person name="Rowley D."/>
            <person name="Amedeo P."/>
            <person name="Bruno D."/>
            <person name="Vamathevan J."/>
            <person name="Miranda M."/>
            <person name="Anderson I.J."/>
            <person name="Fraser J.A."/>
            <person name="Allen J.E."/>
            <person name="Bosdet I.E."/>
            <person name="Brent M.R."/>
            <person name="Chiu R."/>
            <person name="Doering T.L."/>
            <person name="Donlin M.J."/>
            <person name="D'Souza C.A."/>
            <person name="Fox D.S."/>
            <person name="Grinberg V."/>
            <person name="Fu J."/>
            <person name="Fukushima M."/>
            <person name="Haas B.J."/>
            <person name="Huang J.C."/>
            <person name="Janbon G."/>
            <person name="Jones S.J.M."/>
            <person name="Koo H.L."/>
            <person name="Krzywinski M.I."/>
            <person name="Kwon-Chung K.J."/>
            <person name="Lengeler K.B."/>
            <person name="Maiti R."/>
            <person name="Marra M.A."/>
            <person name="Marra R.E."/>
            <person name="Mathewson C.A."/>
            <person name="Mitchell T.G."/>
            <person name="Pertea M."/>
            <person name="Riggs F.R."/>
            <person name="Salzberg S.L."/>
            <person name="Schein J.E."/>
            <person name="Shvartsbeyn A."/>
            <person name="Shin H."/>
            <person name="Shumway M."/>
            <person name="Specht C.A."/>
            <person name="Suh B.B."/>
            <person name="Tenney A."/>
            <person name="Utterback T.R."/>
            <person name="Wickes B.L."/>
            <person name="Wortman J.R."/>
            <person name="Wye N.H."/>
            <person name="Kronstad J.W."/>
            <person name="Lodge J.K."/>
            <person name="Heitman J."/>
            <person name="Davis R.W."/>
            <person name="Fraser C.M."/>
            <person name="Hyman R.W."/>
        </authorList>
    </citation>
    <scope>NUCLEOTIDE SEQUENCE [LARGE SCALE GENOMIC DNA]</scope>
    <source>
        <strain>B-3501A</strain>
    </source>
</reference>